<protein>
    <recommendedName>
        <fullName evidence="1">Small ribosomal subunit protein uS13</fullName>
    </recommendedName>
    <alternativeName>
        <fullName evidence="3">30S ribosomal protein S13</fullName>
    </alternativeName>
</protein>
<name>RS13_LEIXX</name>
<reference key="1">
    <citation type="journal article" date="2004" name="Mol. Plant Microbe Interact.">
        <title>The genome sequence of the Gram-positive sugarcane pathogen Leifsonia xyli subsp. xyli.</title>
        <authorList>
            <person name="Monteiro-Vitorello C.B."/>
            <person name="Camargo L.E.A."/>
            <person name="Van Sluys M.A."/>
            <person name="Kitajima J.P."/>
            <person name="Truffi D."/>
            <person name="do Amaral A.M."/>
            <person name="Harakava R."/>
            <person name="de Oliveira J.C.F."/>
            <person name="Wood D."/>
            <person name="de Oliveira M.C."/>
            <person name="Miyaki C.Y."/>
            <person name="Takita M.A."/>
            <person name="da Silva A.C.R."/>
            <person name="Furlan L.R."/>
            <person name="Carraro D.M."/>
            <person name="Camarotte G."/>
            <person name="Almeida N.F. Jr."/>
            <person name="Carrer H."/>
            <person name="Coutinho L.L."/>
            <person name="El-Dorry H.A."/>
            <person name="Ferro M.I.T."/>
            <person name="Gagliardi P.R."/>
            <person name="Giglioti E."/>
            <person name="Goldman M.H.S."/>
            <person name="Goldman G.H."/>
            <person name="Kimura E.T."/>
            <person name="Ferro E.S."/>
            <person name="Kuramae E.E."/>
            <person name="Lemos E.G.M."/>
            <person name="Lemos M.V.F."/>
            <person name="Mauro S.M.Z."/>
            <person name="Machado M.A."/>
            <person name="Marino C.L."/>
            <person name="Menck C.F."/>
            <person name="Nunes L.R."/>
            <person name="Oliveira R.C."/>
            <person name="Pereira G.G."/>
            <person name="Siqueira W."/>
            <person name="de Souza A.A."/>
            <person name="Tsai S.M."/>
            <person name="Zanca A.S."/>
            <person name="Simpson A.J.G."/>
            <person name="Brumbley S.M."/>
            <person name="Setubal J.C."/>
        </authorList>
    </citation>
    <scope>NUCLEOTIDE SEQUENCE [LARGE SCALE GENOMIC DNA]</scope>
    <source>
        <strain>CTCB07</strain>
    </source>
</reference>
<accession>Q6AD19</accession>
<organism>
    <name type="scientific">Leifsonia xyli subsp. xyli (strain CTCB07)</name>
    <dbReference type="NCBI Taxonomy" id="281090"/>
    <lineage>
        <taxon>Bacteria</taxon>
        <taxon>Bacillati</taxon>
        <taxon>Actinomycetota</taxon>
        <taxon>Actinomycetes</taxon>
        <taxon>Micrococcales</taxon>
        <taxon>Microbacteriaceae</taxon>
        <taxon>Leifsonia</taxon>
    </lineage>
</organism>
<gene>
    <name evidence="1" type="primary">rpsM</name>
    <name type="ordered locus">Lxx20100</name>
</gene>
<keyword id="KW-1185">Reference proteome</keyword>
<keyword id="KW-0687">Ribonucleoprotein</keyword>
<keyword id="KW-0689">Ribosomal protein</keyword>
<keyword id="KW-0694">RNA-binding</keyword>
<keyword id="KW-0699">rRNA-binding</keyword>
<keyword id="KW-0820">tRNA-binding</keyword>
<comment type="function">
    <text evidence="1">Located at the top of the head of the 30S subunit, it contacts several helices of the 16S rRNA. In the 70S ribosome it contacts the 23S rRNA (bridge B1a) and protein L5 of the 50S subunit (bridge B1b), connecting the 2 subunits; these bridges are implicated in subunit movement. Contacts the tRNAs in the A and P-sites.</text>
</comment>
<comment type="subunit">
    <text evidence="1">Part of the 30S ribosomal subunit. Forms a loose heterodimer with protein S19. Forms two bridges to the 50S subunit in the 70S ribosome.</text>
</comment>
<comment type="similarity">
    <text evidence="1">Belongs to the universal ribosomal protein uS13 family.</text>
</comment>
<feature type="chain" id="PRO_0000230522" description="Small ribosomal subunit protein uS13">
    <location>
        <begin position="1"/>
        <end position="124"/>
    </location>
</feature>
<feature type="region of interest" description="Disordered" evidence="2">
    <location>
        <begin position="95"/>
        <end position="124"/>
    </location>
</feature>
<dbReference type="EMBL" id="AE016822">
    <property type="protein sequence ID" value="AAT89725.1"/>
    <property type="molecule type" value="Genomic_DNA"/>
</dbReference>
<dbReference type="RefSeq" id="WP_011186711.1">
    <property type="nucleotide sequence ID" value="NC_006087.1"/>
</dbReference>
<dbReference type="SMR" id="Q6AD19"/>
<dbReference type="STRING" id="281090.Lxx20100"/>
<dbReference type="KEGG" id="lxx:Lxx20100"/>
<dbReference type="eggNOG" id="COG0099">
    <property type="taxonomic scope" value="Bacteria"/>
</dbReference>
<dbReference type="HOGENOM" id="CLU_103849_1_2_11"/>
<dbReference type="Proteomes" id="UP000001306">
    <property type="component" value="Chromosome"/>
</dbReference>
<dbReference type="GO" id="GO:0005829">
    <property type="term" value="C:cytosol"/>
    <property type="evidence" value="ECO:0007669"/>
    <property type="project" value="TreeGrafter"/>
</dbReference>
<dbReference type="GO" id="GO:0015935">
    <property type="term" value="C:small ribosomal subunit"/>
    <property type="evidence" value="ECO:0007669"/>
    <property type="project" value="TreeGrafter"/>
</dbReference>
<dbReference type="GO" id="GO:0019843">
    <property type="term" value="F:rRNA binding"/>
    <property type="evidence" value="ECO:0007669"/>
    <property type="project" value="UniProtKB-UniRule"/>
</dbReference>
<dbReference type="GO" id="GO:0003735">
    <property type="term" value="F:structural constituent of ribosome"/>
    <property type="evidence" value="ECO:0007669"/>
    <property type="project" value="InterPro"/>
</dbReference>
<dbReference type="GO" id="GO:0000049">
    <property type="term" value="F:tRNA binding"/>
    <property type="evidence" value="ECO:0007669"/>
    <property type="project" value="UniProtKB-UniRule"/>
</dbReference>
<dbReference type="GO" id="GO:0006412">
    <property type="term" value="P:translation"/>
    <property type="evidence" value="ECO:0007669"/>
    <property type="project" value="UniProtKB-UniRule"/>
</dbReference>
<dbReference type="FunFam" id="1.10.8.50:FF:000001">
    <property type="entry name" value="30S ribosomal protein S13"/>
    <property type="match status" value="1"/>
</dbReference>
<dbReference type="FunFam" id="4.10.910.10:FF:000001">
    <property type="entry name" value="30S ribosomal protein S13"/>
    <property type="match status" value="1"/>
</dbReference>
<dbReference type="Gene3D" id="1.10.8.50">
    <property type="match status" value="1"/>
</dbReference>
<dbReference type="Gene3D" id="4.10.910.10">
    <property type="entry name" value="30s ribosomal protein s13, domain 2"/>
    <property type="match status" value="1"/>
</dbReference>
<dbReference type="HAMAP" id="MF_01315">
    <property type="entry name" value="Ribosomal_uS13"/>
    <property type="match status" value="1"/>
</dbReference>
<dbReference type="InterPro" id="IPR027437">
    <property type="entry name" value="Rbsml_uS13_C"/>
</dbReference>
<dbReference type="InterPro" id="IPR001892">
    <property type="entry name" value="Ribosomal_uS13"/>
</dbReference>
<dbReference type="InterPro" id="IPR010979">
    <property type="entry name" value="Ribosomal_uS13-like_H2TH"/>
</dbReference>
<dbReference type="InterPro" id="IPR019980">
    <property type="entry name" value="Ribosomal_uS13_bac-type"/>
</dbReference>
<dbReference type="InterPro" id="IPR018269">
    <property type="entry name" value="Ribosomal_uS13_CS"/>
</dbReference>
<dbReference type="NCBIfam" id="TIGR03631">
    <property type="entry name" value="uS13_bact"/>
    <property type="match status" value="1"/>
</dbReference>
<dbReference type="PANTHER" id="PTHR10871">
    <property type="entry name" value="30S RIBOSOMAL PROTEIN S13/40S RIBOSOMAL PROTEIN S18"/>
    <property type="match status" value="1"/>
</dbReference>
<dbReference type="PANTHER" id="PTHR10871:SF1">
    <property type="entry name" value="SMALL RIBOSOMAL SUBUNIT PROTEIN US13M"/>
    <property type="match status" value="1"/>
</dbReference>
<dbReference type="Pfam" id="PF00416">
    <property type="entry name" value="Ribosomal_S13"/>
    <property type="match status" value="1"/>
</dbReference>
<dbReference type="PIRSF" id="PIRSF002134">
    <property type="entry name" value="Ribosomal_S13"/>
    <property type="match status" value="1"/>
</dbReference>
<dbReference type="SUPFAM" id="SSF46946">
    <property type="entry name" value="S13-like H2TH domain"/>
    <property type="match status" value="1"/>
</dbReference>
<dbReference type="PROSITE" id="PS00646">
    <property type="entry name" value="RIBOSOMAL_S13_1"/>
    <property type="match status" value="1"/>
</dbReference>
<dbReference type="PROSITE" id="PS50159">
    <property type="entry name" value="RIBOSOMAL_S13_2"/>
    <property type="match status" value="1"/>
</dbReference>
<sequence length="124" mass="14144">MARLAGVDIPREKRVEVALTYIYGVGRTRALQTLRETEISGEIRVKDLTDEQLVSLRDYIEGNFKVEGDLRREVAADIRRKVEIGSYEGIRHRKGLPVRGQRTKTNARTRKGPKRTVAGKKKAR</sequence>
<proteinExistence type="inferred from homology"/>
<evidence type="ECO:0000255" key="1">
    <source>
        <dbReference type="HAMAP-Rule" id="MF_01315"/>
    </source>
</evidence>
<evidence type="ECO:0000256" key="2">
    <source>
        <dbReference type="SAM" id="MobiDB-lite"/>
    </source>
</evidence>
<evidence type="ECO:0000305" key="3"/>